<name>NTDP_STRZJ</name>
<dbReference type="EC" id="3.6.1.15" evidence="1"/>
<dbReference type="EC" id="3.6.1.6" evidence="1"/>
<dbReference type="EMBL" id="CP000919">
    <property type="protein sequence ID" value="ACO19823.1"/>
    <property type="molecule type" value="Genomic_DNA"/>
</dbReference>
<dbReference type="RefSeq" id="WP_000775321.1">
    <property type="nucleotide sequence ID" value="NC_012466.1"/>
</dbReference>
<dbReference type="SMR" id="C1CGD3"/>
<dbReference type="KEGG" id="sjj:SPJ_1836"/>
<dbReference type="HOGENOM" id="CLU_109787_1_0_9"/>
<dbReference type="Proteomes" id="UP000002206">
    <property type="component" value="Chromosome"/>
</dbReference>
<dbReference type="GO" id="GO:0000287">
    <property type="term" value="F:magnesium ion binding"/>
    <property type="evidence" value="ECO:0007669"/>
    <property type="project" value="UniProtKB-UniRule"/>
</dbReference>
<dbReference type="GO" id="GO:0017110">
    <property type="term" value="F:nucleoside diphosphate phosphatase activity"/>
    <property type="evidence" value="ECO:0007669"/>
    <property type="project" value="UniProtKB-UniRule"/>
</dbReference>
<dbReference type="GO" id="GO:0017111">
    <property type="term" value="F:ribonucleoside triphosphate phosphatase activity"/>
    <property type="evidence" value="ECO:0007669"/>
    <property type="project" value="UniProtKB-UniRule"/>
</dbReference>
<dbReference type="Gene3D" id="2.40.380.10">
    <property type="entry name" value="FomD-like"/>
    <property type="match status" value="1"/>
</dbReference>
<dbReference type="HAMAP" id="MF_01568">
    <property type="entry name" value="Ntdp"/>
    <property type="match status" value="1"/>
</dbReference>
<dbReference type="InterPro" id="IPR007295">
    <property type="entry name" value="DUF402"/>
</dbReference>
<dbReference type="InterPro" id="IPR035930">
    <property type="entry name" value="FomD-like_sf"/>
</dbReference>
<dbReference type="InterPro" id="IPR050212">
    <property type="entry name" value="Ntdp-like"/>
</dbReference>
<dbReference type="InterPro" id="IPR016882">
    <property type="entry name" value="SA1684"/>
</dbReference>
<dbReference type="NCBIfam" id="NF010183">
    <property type="entry name" value="PRK13662.1"/>
    <property type="match status" value="1"/>
</dbReference>
<dbReference type="PANTHER" id="PTHR39159">
    <property type="match status" value="1"/>
</dbReference>
<dbReference type="PANTHER" id="PTHR39159:SF1">
    <property type="entry name" value="UPF0374 PROTEIN YGAC"/>
    <property type="match status" value="1"/>
</dbReference>
<dbReference type="Pfam" id="PF04167">
    <property type="entry name" value="DUF402"/>
    <property type="match status" value="1"/>
</dbReference>
<dbReference type="PIRSF" id="PIRSF028345">
    <property type="entry name" value="UCP028345"/>
    <property type="match status" value="1"/>
</dbReference>
<dbReference type="SUPFAM" id="SSF159234">
    <property type="entry name" value="FomD-like"/>
    <property type="match status" value="1"/>
</dbReference>
<sequence>MKLPKEGDFITIQSYKHDGSLHRTWRDTMVLKTTENAIIGVNDHTLVTESDGRRWVTREPAIVYFHKKYWFNIIAMIRDNGTSYYCNMASPYYLDEEALKYIDYDLDVKIFTDGEKRLLDVEEYERHKRKMNYSDDLDYILKEHVKILVDWINNGRGPFSEAYVNIWYKRYVELKNR</sequence>
<organism>
    <name type="scientific">Streptococcus pneumoniae (strain JJA)</name>
    <dbReference type="NCBI Taxonomy" id="488222"/>
    <lineage>
        <taxon>Bacteria</taxon>
        <taxon>Bacillati</taxon>
        <taxon>Bacillota</taxon>
        <taxon>Bacilli</taxon>
        <taxon>Lactobacillales</taxon>
        <taxon>Streptococcaceae</taxon>
        <taxon>Streptococcus</taxon>
    </lineage>
</organism>
<feature type="chain" id="PRO_1000185478" description="Nucleoside triphosphate/diphosphate phosphatase">
    <location>
        <begin position="1"/>
        <end position="177"/>
    </location>
</feature>
<feature type="active site" description="Proton donor" evidence="1">
    <location>
        <position position="23"/>
    </location>
</feature>
<feature type="binding site" evidence="1">
    <location>
        <position position="87"/>
    </location>
    <ligand>
        <name>Mg(2+)</name>
        <dbReference type="ChEBI" id="CHEBI:18420"/>
        <label>1</label>
    </ligand>
</feature>
<feature type="binding site" evidence="1">
    <location>
        <position position="103"/>
    </location>
    <ligand>
        <name>Mg(2+)</name>
        <dbReference type="ChEBI" id="CHEBI:18420"/>
        <label>1</label>
    </ligand>
</feature>
<feature type="binding site" evidence="1">
    <location>
        <position position="105"/>
    </location>
    <ligand>
        <name>Mg(2+)</name>
        <dbReference type="ChEBI" id="CHEBI:18420"/>
        <label>2</label>
    </ligand>
</feature>
<feature type="binding site" evidence="1">
    <location>
        <position position="107"/>
    </location>
    <ligand>
        <name>Mg(2+)</name>
        <dbReference type="ChEBI" id="CHEBI:18420"/>
        <label>1</label>
    </ligand>
</feature>
<feature type="binding site" evidence="1">
    <location>
        <position position="107"/>
    </location>
    <ligand>
        <name>Mg(2+)</name>
        <dbReference type="ChEBI" id="CHEBI:18420"/>
        <label>2</label>
    </ligand>
</feature>
<feature type="binding site" evidence="1">
    <location>
        <position position="120"/>
    </location>
    <ligand>
        <name>Mg(2+)</name>
        <dbReference type="ChEBI" id="CHEBI:18420"/>
        <label>2</label>
    </ligand>
</feature>
<feature type="binding site" evidence="1">
    <location>
        <position position="123"/>
    </location>
    <ligand>
        <name>Mg(2+)</name>
        <dbReference type="ChEBI" id="CHEBI:18420"/>
        <label>2</label>
    </ligand>
</feature>
<accession>C1CGD3</accession>
<reference key="1">
    <citation type="journal article" date="2010" name="Genome Biol.">
        <title>Structure and dynamics of the pan-genome of Streptococcus pneumoniae and closely related species.</title>
        <authorList>
            <person name="Donati C."/>
            <person name="Hiller N.L."/>
            <person name="Tettelin H."/>
            <person name="Muzzi A."/>
            <person name="Croucher N.J."/>
            <person name="Angiuoli S.V."/>
            <person name="Oggioni M."/>
            <person name="Dunning Hotopp J.C."/>
            <person name="Hu F.Z."/>
            <person name="Riley D.R."/>
            <person name="Covacci A."/>
            <person name="Mitchell T.J."/>
            <person name="Bentley S.D."/>
            <person name="Kilian M."/>
            <person name="Ehrlich G.D."/>
            <person name="Rappuoli R."/>
            <person name="Moxon E.R."/>
            <person name="Masignani V."/>
        </authorList>
    </citation>
    <scope>NUCLEOTIDE SEQUENCE [LARGE SCALE GENOMIC DNA]</scope>
    <source>
        <strain>JJA</strain>
    </source>
</reference>
<proteinExistence type="inferred from homology"/>
<gene>
    <name type="ordered locus">SPJ_1836</name>
</gene>
<evidence type="ECO:0000255" key="1">
    <source>
        <dbReference type="HAMAP-Rule" id="MF_01568"/>
    </source>
</evidence>
<protein>
    <recommendedName>
        <fullName evidence="1">Nucleoside triphosphate/diphosphate phosphatase</fullName>
        <ecNumber evidence="1">3.6.1.15</ecNumber>
        <ecNumber evidence="1">3.6.1.6</ecNumber>
    </recommendedName>
</protein>
<keyword id="KW-0378">Hydrolase</keyword>
<keyword id="KW-0460">Magnesium</keyword>
<keyword id="KW-0479">Metal-binding</keyword>
<comment type="function">
    <text evidence="1">Has nucleoside phosphatase activity towards nucleoside triphosphates and nucleoside diphosphates.</text>
</comment>
<comment type="catalytic activity">
    <reaction evidence="1">
        <text>a ribonucleoside 5'-triphosphate + H2O = a ribonucleoside 5'-diphosphate + phosphate + H(+)</text>
        <dbReference type="Rhea" id="RHEA:23680"/>
        <dbReference type="ChEBI" id="CHEBI:15377"/>
        <dbReference type="ChEBI" id="CHEBI:15378"/>
        <dbReference type="ChEBI" id="CHEBI:43474"/>
        <dbReference type="ChEBI" id="CHEBI:57930"/>
        <dbReference type="ChEBI" id="CHEBI:61557"/>
        <dbReference type="EC" id="3.6.1.15"/>
    </reaction>
</comment>
<comment type="catalytic activity">
    <reaction evidence="1">
        <text>a ribonucleoside 5'-diphosphate + H2O = a ribonucleoside 5'-phosphate + phosphate + H(+)</text>
        <dbReference type="Rhea" id="RHEA:36799"/>
        <dbReference type="ChEBI" id="CHEBI:15377"/>
        <dbReference type="ChEBI" id="CHEBI:15378"/>
        <dbReference type="ChEBI" id="CHEBI:43474"/>
        <dbReference type="ChEBI" id="CHEBI:57930"/>
        <dbReference type="ChEBI" id="CHEBI:58043"/>
        <dbReference type="EC" id="3.6.1.6"/>
    </reaction>
</comment>
<comment type="cofactor">
    <cofactor evidence="1">
        <name>Mg(2+)</name>
        <dbReference type="ChEBI" id="CHEBI:18420"/>
    </cofactor>
</comment>
<comment type="similarity">
    <text evidence="1">Belongs to the Ntdp family.</text>
</comment>